<reference key="1">
    <citation type="journal article" date="2000" name="Nature">
        <title>Complete genome sequence of Pseudomonas aeruginosa PAO1, an opportunistic pathogen.</title>
        <authorList>
            <person name="Stover C.K."/>
            <person name="Pham X.-Q.T."/>
            <person name="Erwin A.L."/>
            <person name="Mizoguchi S.D."/>
            <person name="Warrener P."/>
            <person name="Hickey M.J."/>
            <person name="Brinkman F.S.L."/>
            <person name="Hufnagle W.O."/>
            <person name="Kowalik D.J."/>
            <person name="Lagrou M."/>
            <person name="Garber R.L."/>
            <person name="Goltry L."/>
            <person name="Tolentino E."/>
            <person name="Westbrock-Wadman S."/>
            <person name="Yuan Y."/>
            <person name="Brody L.L."/>
            <person name="Coulter S.N."/>
            <person name="Folger K.R."/>
            <person name="Kas A."/>
            <person name="Larbig K."/>
            <person name="Lim R.M."/>
            <person name="Smith K.A."/>
            <person name="Spencer D.H."/>
            <person name="Wong G.K.-S."/>
            <person name="Wu Z."/>
            <person name="Paulsen I.T."/>
            <person name="Reizer J."/>
            <person name="Saier M.H. Jr."/>
            <person name="Hancock R.E.W."/>
            <person name="Lory S."/>
            <person name="Olson M.V."/>
        </authorList>
    </citation>
    <scope>NUCLEOTIDE SEQUENCE [LARGE SCALE GENOMIC DNA]</scope>
    <source>
        <strain>ATCC 15692 / DSM 22644 / CIP 104116 / JCM 14847 / LMG 12228 / 1C / PRS 101 / PAO1</strain>
    </source>
</reference>
<reference key="2">
    <citation type="thesis" date="2005" institute="Ben-Gurion University" country="Israel">
        <title>Biofouling in water treatment systems: effect of membrane properties on biofilm formation.</title>
        <authorList>
            <person name="Liddor M."/>
        </authorList>
    </citation>
    <scope>PROTEIN SEQUENCE OF 110-138; 144-156; 245-260; 318-325; 393-404; 414-426 AND 468-480</scope>
    <source>
        <strain>ATCC 33467 / type 1 smooth</strain>
    </source>
</reference>
<comment type="function">
    <text evidence="1">Involved in the metabolic adaptation in response to environmental changes. Catalyzes the reversible formation of succinate and glyoxylate from isocitrate, a key step of the glyoxylate cycle, which operates as an anaplerotic route for replenishing the tricarboxylic acid cycle during growth on fatty acid substrates.</text>
</comment>
<comment type="catalytic activity">
    <reaction evidence="1">
        <text>D-threo-isocitrate = glyoxylate + succinate</text>
        <dbReference type="Rhea" id="RHEA:13245"/>
        <dbReference type="ChEBI" id="CHEBI:15562"/>
        <dbReference type="ChEBI" id="CHEBI:30031"/>
        <dbReference type="ChEBI" id="CHEBI:36655"/>
        <dbReference type="EC" id="4.1.3.1"/>
    </reaction>
</comment>
<comment type="cofactor">
    <cofactor evidence="1">
        <name>Mg(2+)</name>
        <dbReference type="ChEBI" id="CHEBI:18420"/>
    </cofactor>
</comment>
<comment type="pathway">
    <text evidence="1">Carbohydrate metabolism; glyoxylate cycle; (S)-malate from isocitrate: step 1/2.</text>
</comment>
<comment type="subunit">
    <text evidence="1">Homotetramer.</text>
</comment>
<comment type="similarity">
    <text evidence="3">Belongs to the isocitrate lyase/PEP mutase superfamily. Isocitrate lyase family.</text>
</comment>
<protein>
    <recommendedName>
        <fullName evidence="1">Isocitrate lyase</fullName>
        <shortName evidence="1">ICL</shortName>
        <ecNumber evidence="1">4.1.3.1</ecNumber>
    </recommendedName>
    <alternativeName>
        <fullName evidence="1">Isocitrase</fullName>
    </alternativeName>
    <alternativeName>
        <fullName evidence="1">Isocitratase</fullName>
    </alternativeName>
</protein>
<organism>
    <name type="scientific">Pseudomonas aeruginosa (strain ATCC 15692 / DSM 22644 / CIP 104116 / JCM 14847 / LMG 12228 / 1C / PRS 101 / PAO1)</name>
    <dbReference type="NCBI Taxonomy" id="208964"/>
    <lineage>
        <taxon>Bacteria</taxon>
        <taxon>Pseudomonadati</taxon>
        <taxon>Pseudomonadota</taxon>
        <taxon>Gammaproteobacteria</taxon>
        <taxon>Pseudomonadales</taxon>
        <taxon>Pseudomonadaceae</taxon>
        <taxon>Pseudomonas</taxon>
    </lineage>
</organism>
<evidence type="ECO:0000250" key="1">
    <source>
        <dbReference type="UniProtKB" id="P0A9G6"/>
    </source>
</evidence>
<evidence type="ECO:0000250" key="2">
    <source>
        <dbReference type="UniProtKB" id="P9WKK7"/>
    </source>
</evidence>
<evidence type="ECO:0000305" key="3"/>
<evidence type="ECO:0007829" key="4">
    <source>
        <dbReference type="PDB" id="6G1O"/>
    </source>
</evidence>
<sequence length="531" mass="58887">MSAYQNEIKAVAALKEKNGSSWSAINPEYAARMRIQNRFKTGLDIAKYTAAIMRKDMAEYDADSSVYTQSLGCWHGFIGQQKLISIKKHLKTTNKRYLYLSGWMVAALRSDFGPLPDQSMHEKTAVSGLIEELYTFLRQADARELDLLFTGLDAARAAGDKAKEAELLAQIDNFETHVVPIIADIDAGFGNAEATYLLAKKMIEAGACCIQIENQVSDEKQCGHQDGKVTVPHIDFLAKINAVRYAFLELGVDDGVIVARTDSLGAGLTKQIAVTNEPGDLGDLYNSFLDCEEISESELGNGDVVIKREGKLLRPKRLASNLFQFRKGTGEDRCVLDCITSLQNGADLLWIETEKPHVGQIKAMVDRIREVIPNAKLVYNNSPSFNWTLNFRQQVFDAFVAEGKDVSAYDRNKLMSVEYDDTELAKVADEKIRTFQRDGSAHAGIFHHLITLPTYHTAALSTDNLAKGYFADEGMLAYVKGVQRQELRQGIACVKHQNMAGSDIGDNHKEYFAGEAALKASGKDNTMNQFH</sequence>
<dbReference type="EC" id="4.1.3.1" evidence="1"/>
<dbReference type="EMBL" id="AE004091">
    <property type="protein sequence ID" value="AAG06022.1"/>
    <property type="molecule type" value="Genomic_DNA"/>
</dbReference>
<dbReference type="PIR" id="G83315">
    <property type="entry name" value="G83315"/>
</dbReference>
<dbReference type="RefSeq" id="WP_003113373.1">
    <property type="nucleotide sequence ID" value="NZ_QZGE01000008.1"/>
</dbReference>
<dbReference type="PDB" id="6G1O">
    <property type="method" value="X-ray"/>
    <property type="resolution" value="1.88 A"/>
    <property type="chains" value="A=1-486"/>
</dbReference>
<dbReference type="PDBsum" id="6G1O"/>
<dbReference type="SMR" id="Q9I0K4"/>
<dbReference type="FunCoup" id="Q9I0K4">
    <property type="interactions" value="416"/>
</dbReference>
<dbReference type="STRING" id="208964.PA2634"/>
<dbReference type="PaxDb" id="208964-PA2634"/>
<dbReference type="KEGG" id="pae:PA2634"/>
<dbReference type="PATRIC" id="fig|208964.12.peg.2756"/>
<dbReference type="PseudoCAP" id="PA2634"/>
<dbReference type="HOGENOM" id="CLU_038243_0_0_6"/>
<dbReference type="InParanoid" id="Q9I0K4"/>
<dbReference type="OrthoDB" id="8629576at2"/>
<dbReference type="PhylomeDB" id="Q9I0K4"/>
<dbReference type="BioCyc" id="PAER208964:G1FZ6-2674-MONOMER"/>
<dbReference type="BRENDA" id="4.1.3.1">
    <property type="organism ID" value="5087"/>
</dbReference>
<dbReference type="UniPathway" id="UPA00703">
    <property type="reaction ID" value="UER00719"/>
</dbReference>
<dbReference type="Proteomes" id="UP000002438">
    <property type="component" value="Chromosome"/>
</dbReference>
<dbReference type="GO" id="GO:0004451">
    <property type="term" value="F:isocitrate lyase activity"/>
    <property type="evidence" value="ECO:0000314"/>
    <property type="project" value="PseudoCAP"/>
</dbReference>
<dbReference type="GO" id="GO:0046872">
    <property type="term" value="F:metal ion binding"/>
    <property type="evidence" value="ECO:0007669"/>
    <property type="project" value="UniProtKB-KW"/>
</dbReference>
<dbReference type="GO" id="GO:0006097">
    <property type="term" value="P:glyoxylate cycle"/>
    <property type="evidence" value="ECO:0007669"/>
    <property type="project" value="UniProtKB-UniPathway"/>
</dbReference>
<dbReference type="GO" id="GO:1900232">
    <property type="term" value="P:negative regulation of single-species biofilm formation on inanimate substrate"/>
    <property type="evidence" value="ECO:0000315"/>
    <property type="project" value="PseudoCAP"/>
</dbReference>
<dbReference type="GO" id="GO:0006099">
    <property type="term" value="P:tricarboxylic acid cycle"/>
    <property type="evidence" value="ECO:0007669"/>
    <property type="project" value="UniProtKB-KW"/>
</dbReference>
<dbReference type="CDD" id="cd00377">
    <property type="entry name" value="ICL_PEPM"/>
    <property type="match status" value="1"/>
</dbReference>
<dbReference type="Gene3D" id="3.20.20.60">
    <property type="entry name" value="Phosphoenolpyruvate-binding domains"/>
    <property type="match status" value="1"/>
</dbReference>
<dbReference type="InterPro" id="IPR039556">
    <property type="entry name" value="ICL/PEPM"/>
</dbReference>
<dbReference type="InterPro" id="IPR006254">
    <property type="entry name" value="Isocitrate_lyase"/>
</dbReference>
<dbReference type="InterPro" id="IPR015813">
    <property type="entry name" value="Pyrv/PenolPyrv_kinase-like_dom"/>
</dbReference>
<dbReference type="InterPro" id="IPR040442">
    <property type="entry name" value="Pyrv_kinase-like_dom_sf"/>
</dbReference>
<dbReference type="NCBIfam" id="NF005074">
    <property type="entry name" value="PRK06498.1"/>
    <property type="match status" value="1"/>
</dbReference>
<dbReference type="PANTHER" id="PTHR21631:SF3">
    <property type="entry name" value="BIFUNCTIONAL GLYOXYLATE CYCLE PROTEIN"/>
    <property type="match status" value="1"/>
</dbReference>
<dbReference type="PANTHER" id="PTHR21631">
    <property type="entry name" value="ISOCITRATE LYASE/MALATE SYNTHASE"/>
    <property type="match status" value="1"/>
</dbReference>
<dbReference type="Pfam" id="PF00463">
    <property type="entry name" value="ICL"/>
    <property type="match status" value="3"/>
</dbReference>
<dbReference type="PIRSF" id="PIRSF001362">
    <property type="entry name" value="Isocit_lyase"/>
    <property type="match status" value="1"/>
</dbReference>
<dbReference type="SUPFAM" id="SSF51621">
    <property type="entry name" value="Phosphoenolpyruvate/pyruvate domain"/>
    <property type="match status" value="1"/>
</dbReference>
<gene>
    <name type="ordered locus">PA2634</name>
</gene>
<name>ACEA_PSEAE</name>
<accession>Q9I0K4</accession>
<feature type="chain" id="PRO_0000068780" description="Isocitrate lyase">
    <location>
        <begin position="1"/>
        <end position="531"/>
    </location>
</feature>
<feature type="active site" description="Proton acceptor" evidence="1">
    <location>
        <position position="222"/>
    </location>
</feature>
<feature type="binding site" evidence="1">
    <location>
        <begin position="101"/>
        <end position="103"/>
    </location>
    <ligand>
        <name>substrate</name>
    </ligand>
</feature>
<feature type="binding site" evidence="1">
    <location>
        <position position="184"/>
    </location>
    <ligand>
        <name>Mg(2+)</name>
        <dbReference type="ChEBI" id="CHEBI:18420"/>
    </ligand>
</feature>
<feature type="binding site" evidence="2">
    <location>
        <begin position="223"/>
        <end position="224"/>
    </location>
    <ligand>
        <name>substrate</name>
    </ligand>
</feature>
<feature type="binding site" evidence="2">
    <location>
        <begin position="380"/>
        <end position="384"/>
    </location>
    <ligand>
        <name>substrate</name>
    </ligand>
</feature>
<feature type="binding site" evidence="2">
    <location>
        <position position="451"/>
    </location>
    <ligand>
        <name>substrate</name>
    </ligand>
</feature>
<feature type="helix" evidence="4">
    <location>
        <begin position="3"/>
        <end position="18"/>
    </location>
</feature>
<feature type="helix" evidence="4">
    <location>
        <begin position="19"/>
        <end position="22"/>
    </location>
</feature>
<feature type="helix" evidence="4">
    <location>
        <begin position="27"/>
        <end position="35"/>
    </location>
</feature>
<feature type="helix" evidence="4">
    <location>
        <begin position="42"/>
        <end position="62"/>
    </location>
</feature>
<feature type="strand" evidence="4">
    <location>
        <begin position="68"/>
        <end position="72"/>
    </location>
</feature>
<feature type="helix" evidence="4">
    <location>
        <begin position="76"/>
        <end position="90"/>
    </location>
</feature>
<feature type="strand" evidence="4">
    <location>
        <begin position="96"/>
        <end position="100"/>
    </location>
</feature>
<feature type="helix" evidence="4">
    <location>
        <begin position="102"/>
        <end position="108"/>
    </location>
</feature>
<feature type="strand" evidence="4">
    <location>
        <begin position="117"/>
        <end position="119"/>
    </location>
</feature>
<feature type="helix" evidence="4">
    <location>
        <begin position="124"/>
        <end position="157"/>
    </location>
</feature>
<feature type="helix" evidence="4">
    <location>
        <begin position="161"/>
        <end position="172"/>
    </location>
</feature>
<feature type="strand" evidence="4">
    <location>
        <begin position="181"/>
        <end position="184"/>
    </location>
</feature>
<feature type="strand" evidence="4">
    <location>
        <begin position="189"/>
        <end position="191"/>
    </location>
</feature>
<feature type="helix" evidence="4">
    <location>
        <begin position="192"/>
        <end position="204"/>
    </location>
</feature>
<feature type="strand" evidence="4">
    <location>
        <begin position="208"/>
        <end position="215"/>
    </location>
</feature>
<feature type="helix" evidence="4">
    <location>
        <begin position="217"/>
        <end position="219"/>
    </location>
</feature>
<feature type="helix" evidence="4">
    <location>
        <begin position="233"/>
        <end position="249"/>
    </location>
</feature>
<feature type="strand" evidence="4">
    <location>
        <begin position="256"/>
        <end position="261"/>
    </location>
</feature>
<feature type="helix" evidence="4">
    <location>
        <begin position="263"/>
        <end position="265"/>
    </location>
</feature>
<feature type="strand" evidence="4">
    <location>
        <begin position="268"/>
        <end position="270"/>
    </location>
</feature>
<feature type="helix" evidence="4">
    <location>
        <begin position="281"/>
        <end position="287"/>
    </location>
</feature>
<feature type="turn" evidence="4">
    <location>
        <begin position="296"/>
        <end position="298"/>
    </location>
</feature>
<feature type="strand" evidence="4">
    <location>
        <begin position="306"/>
        <end position="308"/>
    </location>
</feature>
<feature type="strand" evidence="4">
    <location>
        <begin position="311"/>
        <end position="315"/>
    </location>
</feature>
<feature type="strand" evidence="4">
    <location>
        <begin position="323"/>
        <end position="325"/>
    </location>
</feature>
<feature type="helix" evidence="4">
    <location>
        <begin position="330"/>
        <end position="343"/>
    </location>
</feature>
<feature type="strand" evidence="4">
    <location>
        <begin position="347"/>
        <end position="351"/>
    </location>
</feature>
<feature type="helix" evidence="4">
    <location>
        <begin position="358"/>
        <end position="369"/>
    </location>
</feature>
<feature type="strand" evidence="4">
    <location>
        <begin position="377"/>
        <end position="380"/>
    </location>
</feature>
<feature type="helix" evidence="4">
    <location>
        <begin position="387"/>
        <end position="400"/>
    </location>
</feature>
<feature type="helix" evidence="4">
    <location>
        <begin position="406"/>
        <end position="408"/>
    </location>
</feature>
<feature type="strand" evidence="4">
    <location>
        <begin position="411"/>
        <end position="413"/>
    </location>
</feature>
<feature type="helix" evidence="4">
    <location>
        <begin position="423"/>
        <end position="442"/>
    </location>
</feature>
<feature type="strand" evidence="4">
    <location>
        <begin position="445"/>
        <end position="452"/>
    </location>
</feature>
<feature type="helix" evidence="4">
    <location>
        <begin position="453"/>
        <end position="469"/>
    </location>
</feature>
<feature type="turn" evidence="4">
    <location>
        <begin position="472"/>
        <end position="474"/>
    </location>
</feature>
<feature type="helix" evidence="4">
    <location>
        <begin position="475"/>
        <end position="481"/>
    </location>
</feature>
<feature type="turn" evidence="4">
    <location>
        <begin position="482"/>
        <end position="485"/>
    </location>
</feature>
<proteinExistence type="evidence at protein level"/>
<keyword id="KW-0002">3D-structure</keyword>
<keyword id="KW-0903">Direct protein sequencing</keyword>
<keyword id="KW-0329">Glyoxylate bypass</keyword>
<keyword id="KW-0456">Lyase</keyword>
<keyword id="KW-0460">Magnesium</keyword>
<keyword id="KW-0479">Metal-binding</keyword>
<keyword id="KW-1185">Reference proteome</keyword>
<keyword id="KW-0816">Tricarboxylic acid cycle</keyword>